<accession>Q839G0</accession>
<reference key="1">
    <citation type="journal article" date="2003" name="Science">
        <title>Role of mobile DNA in the evolution of vancomycin-resistant Enterococcus faecalis.</title>
        <authorList>
            <person name="Paulsen I.T."/>
            <person name="Banerjei L."/>
            <person name="Myers G.S.A."/>
            <person name="Nelson K.E."/>
            <person name="Seshadri R."/>
            <person name="Read T.D."/>
            <person name="Fouts D.E."/>
            <person name="Eisen J.A."/>
            <person name="Gill S.R."/>
            <person name="Heidelberg J.F."/>
            <person name="Tettelin H."/>
            <person name="Dodson R.J."/>
            <person name="Umayam L.A."/>
            <person name="Brinkac L.M."/>
            <person name="Beanan M.J."/>
            <person name="Daugherty S.C."/>
            <person name="DeBoy R.T."/>
            <person name="Durkin S.A."/>
            <person name="Kolonay J.F."/>
            <person name="Madupu R."/>
            <person name="Nelson W.C."/>
            <person name="Vamathevan J.J."/>
            <person name="Tran B."/>
            <person name="Upton J."/>
            <person name="Hansen T."/>
            <person name="Shetty J."/>
            <person name="Khouri H.M."/>
            <person name="Utterback T.R."/>
            <person name="Radune D."/>
            <person name="Ketchum K.A."/>
            <person name="Dougherty B.A."/>
            <person name="Fraser C.M."/>
        </authorList>
    </citation>
    <scope>NUCLEOTIDE SEQUENCE [LARGE SCALE GENOMIC DNA]</scope>
    <source>
        <strain>ATCC 700802 / V583</strain>
    </source>
</reference>
<keyword id="KW-0002">3D-structure</keyword>
<keyword id="KW-1185">Reference proteome</keyword>
<keyword id="KW-0687">Ribonucleoprotein</keyword>
<keyword id="KW-0689">Ribosomal protein</keyword>
<keyword id="KW-0694">RNA-binding</keyword>
<keyword id="KW-0699">rRNA-binding</keyword>
<comment type="function">
    <text evidence="1">Protein S19 forms a complex with S13 that binds strongly to the 16S ribosomal RNA.</text>
</comment>
<comment type="similarity">
    <text evidence="1">Belongs to the universal ribosomal protein uS19 family.</text>
</comment>
<evidence type="ECO:0000255" key="1">
    <source>
        <dbReference type="HAMAP-Rule" id="MF_00531"/>
    </source>
</evidence>
<evidence type="ECO:0000305" key="2"/>
<evidence type="ECO:0007829" key="3">
    <source>
        <dbReference type="PDB" id="6WUA"/>
    </source>
</evidence>
<organism>
    <name type="scientific">Enterococcus faecalis (strain ATCC 700802 / V583)</name>
    <dbReference type="NCBI Taxonomy" id="226185"/>
    <lineage>
        <taxon>Bacteria</taxon>
        <taxon>Bacillati</taxon>
        <taxon>Bacillota</taxon>
        <taxon>Bacilli</taxon>
        <taxon>Lactobacillales</taxon>
        <taxon>Enterococcaceae</taxon>
        <taxon>Enterococcus</taxon>
    </lineage>
</organism>
<feature type="chain" id="PRO_0000129823" description="Small ribosomal subunit protein uS19">
    <location>
        <begin position="1"/>
        <end position="92"/>
    </location>
</feature>
<feature type="helix" evidence="3">
    <location>
        <begin position="13"/>
        <end position="22"/>
    </location>
</feature>
<feature type="strand" evidence="3">
    <location>
        <begin position="23"/>
        <end position="26"/>
    </location>
</feature>
<feature type="strand" evidence="3">
    <location>
        <begin position="48"/>
        <end position="52"/>
    </location>
</feature>
<feature type="strand" evidence="3">
    <location>
        <begin position="54"/>
        <end position="61"/>
    </location>
</feature>
<feature type="strand" evidence="3">
    <location>
        <begin position="67"/>
        <end position="70"/>
    </location>
</feature>
<feature type="helix" evidence="3">
    <location>
        <begin position="71"/>
        <end position="74"/>
    </location>
</feature>
<name>RS19_ENTFA</name>
<gene>
    <name evidence="1" type="primary">rpsS</name>
    <name type="ordered locus">EF_0210</name>
</gene>
<proteinExistence type="evidence at protein level"/>
<sequence>MGRSLKKGPFVDDHLMKKVEAQQGAEKKKVIKTWSRRSTIFPSFVGFTIAVYDGRKHVPVYIQEDMVGHKLGEFAPTRTYRGHVADDKKTKR</sequence>
<protein>
    <recommendedName>
        <fullName evidence="1">Small ribosomal subunit protein uS19</fullName>
    </recommendedName>
    <alternativeName>
        <fullName evidence="2">30S ribosomal protein S19</fullName>
    </alternativeName>
</protein>
<dbReference type="EMBL" id="AE016830">
    <property type="protein sequence ID" value="AAO80079.1"/>
    <property type="molecule type" value="Genomic_DNA"/>
</dbReference>
<dbReference type="RefSeq" id="NP_814008.1">
    <property type="nucleotide sequence ID" value="NC_004668.1"/>
</dbReference>
<dbReference type="RefSeq" id="WP_002356205.1">
    <property type="nucleotide sequence ID" value="NZ_KE136524.1"/>
</dbReference>
<dbReference type="PDB" id="6WUA">
    <property type="method" value="EM"/>
    <property type="resolution" value="3.20 A"/>
    <property type="chains" value="s=4-81"/>
</dbReference>
<dbReference type="PDB" id="7P7Q">
    <property type="method" value="EM"/>
    <property type="resolution" value="2.40 A"/>
    <property type="chains" value="t=1-92"/>
</dbReference>
<dbReference type="PDB" id="7P7R">
    <property type="method" value="EM"/>
    <property type="resolution" value="2.90 A"/>
    <property type="chains" value="t=1-92"/>
</dbReference>
<dbReference type="PDBsum" id="6WUA"/>
<dbReference type="PDBsum" id="7P7Q"/>
<dbReference type="PDBsum" id="7P7R"/>
<dbReference type="EMDB" id="EMD-13241"/>
<dbReference type="EMDB" id="EMD-13242"/>
<dbReference type="SMR" id="Q839G0"/>
<dbReference type="STRING" id="226185.EF_0210"/>
<dbReference type="EnsemblBacteria" id="AAO80079">
    <property type="protein sequence ID" value="AAO80079"/>
    <property type="gene ID" value="EF_0210"/>
</dbReference>
<dbReference type="GeneID" id="60892705"/>
<dbReference type="KEGG" id="efa:EF0210"/>
<dbReference type="PATRIC" id="fig|226185.45.peg.56"/>
<dbReference type="eggNOG" id="COG0185">
    <property type="taxonomic scope" value="Bacteria"/>
</dbReference>
<dbReference type="HOGENOM" id="CLU_144911_0_1_9"/>
<dbReference type="Proteomes" id="UP000001415">
    <property type="component" value="Chromosome"/>
</dbReference>
<dbReference type="GO" id="GO:0005737">
    <property type="term" value="C:cytoplasm"/>
    <property type="evidence" value="ECO:0007669"/>
    <property type="project" value="UniProtKB-ARBA"/>
</dbReference>
<dbReference type="GO" id="GO:0015935">
    <property type="term" value="C:small ribosomal subunit"/>
    <property type="evidence" value="ECO:0007669"/>
    <property type="project" value="InterPro"/>
</dbReference>
<dbReference type="GO" id="GO:0019843">
    <property type="term" value="F:rRNA binding"/>
    <property type="evidence" value="ECO:0007669"/>
    <property type="project" value="UniProtKB-UniRule"/>
</dbReference>
<dbReference type="GO" id="GO:0003735">
    <property type="term" value="F:structural constituent of ribosome"/>
    <property type="evidence" value="ECO:0007669"/>
    <property type="project" value="InterPro"/>
</dbReference>
<dbReference type="GO" id="GO:0000028">
    <property type="term" value="P:ribosomal small subunit assembly"/>
    <property type="evidence" value="ECO:0007669"/>
    <property type="project" value="TreeGrafter"/>
</dbReference>
<dbReference type="GO" id="GO:0006412">
    <property type="term" value="P:translation"/>
    <property type="evidence" value="ECO:0007669"/>
    <property type="project" value="UniProtKB-UniRule"/>
</dbReference>
<dbReference type="FunFam" id="3.30.860.10:FF:000001">
    <property type="entry name" value="30S ribosomal protein S19"/>
    <property type="match status" value="1"/>
</dbReference>
<dbReference type="Gene3D" id="3.30.860.10">
    <property type="entry name" value="30s Ribosomal Protein S19, Chain A"/>
    <property type="match status" value="1"/>
</dbReference>
<dbReference type="HAMAP" id="MF_00531">
    <property type="entry name" value="Ribosomal_uS19"/>
    <property type="match status" value="1"/>
</dbReference>
<dbReference type="InterPro" id="IPR002222">
    <property type="entry name" value="Ribosomal_uS19"/>
</dbReference>
<dbReference type="InterPro" id="IPR005732">
    <property type="entry name" value="Ribosomal_uS19_bac-type"/>
</dbReference>
<dbReference type="InterPro" id="IPR020934">
    <property type="entry name" value="Ribosomal_uS19_CS"/>
</dbReference>
<dbReference type="InterPro" id="IPR023575">
    <property type="entry name" value="Ribosomal_uS19_SF"/>
</dbReference>
<dbReference type="NCBIfam" id="TIGR01050">
    <property type="entry name" value="rpsS_bact"/>
    <property type="match status" value="1"/>
</dbReference>
<dbReference type="PANTHER" id="PTHR11880">
    <property type="entry name" value="RIBOSOMAL PROTEIN S19P FAMILY MEMBER"/>
    <property type="match status" value="1"/>
</dbReference>
<dbReference type="PANTHER" id="PTHR11880:SF8">
    <property type="entry name" value="SMALL RIBOSOMAL SUBUNIT PROTEIN US19M"/>
    <property type="match status" value="1"/>
</dbReference>
<dbReference type="Pfam" id="PF00203">
    <property type="entry name" value="Ribosomal_S19"/>
    <property type="match status" value="1"/>
</dbReference>
<dbReference type="PIRSF" id="PIRSF002144">
    <property type="entry name" value="Ribosomal_S19"/>
    <property type="match status" value="1"/>
</dbReference>
<dbReference type="PRINTS" id="PR00975">
    <property type="entry name" value="RIBOSOMALS19"/>
</dbReference>
<dbReference type="SUPFAM" id="SSF54570">
    <property type="entry name" value="Ribosomal protein S19"/>
    <property type="match status" value="1"/>
</dbReference>
<dbReference type="PROSITE" id="PS00323">
    <property type="entry name" value="RIBOSOMAL_S19"/>
    <property type="match status" value="1"/>
</dbReference>